<comment type="function">
    <text evidence="1">Specifically methylates the pseudouridine at position 1915 (m3Psi1915) in 23S rRNA.</text>
</comment>
<comment type="catalytic activity">
    <reaction evidence="1">
        <text>pseudouridine(1915) in 23S rRNA + S-adenosyl-L-methionine = N(3)-methylpseudouridine(1915) in 23S rRNA + S-adenosyl-L-homocysteine + H(+)</text>
        <dbReference type="Rhea" id="RHEA:42752"/>
        <dbReference type="Rhea" id="RHEA-COMP:10221"/>
        <dbReference type="Rhea" id="RHEA-COMP:10222"/>
        <dbReference type="ChEBI" id="CHEBI:15378"/>
        <dbReference type="ChEBI" id="CHEBI:57856"/>
        <dbReference type="ChEBI" id="CHEBI:59789"/>
        <dbReference type="ChEBI" id="CHEBI:65314"/>
        <dbReference type="ChEBI" id="CHEBI:74486"/>
        <dbReference type="EC" id="2.1.1.177"/>
    </reaction>
</comment>
<comment type="subunit">
    <text evidence="1">Homodimer.</text>
</comment>
<comment type="subcellular location">
    <subcellularLocation>
        <location evidence="1">Cytoplasm</location>
    </subcellularLocation>
</comment>
<comment type="similarity">
    <text evidence="1">Belongs to the RNA methyltransferase RlmH family.</text>
</comment>
<dbReference type="EC" id="2.1.1.177" evidence="1"/>
<dbReference type="EMBL" id="BA000012">
    <property type="protein sequence ID" value="BAB50767.1"/>
    <property type="molecule type" value="Genomic_DNA"/>
</dbReference>
<dbReference type="RefSeq" id="WP_010912110.1">
    <property type="nucleotide sequence ID" value="NC_002678.2"/>
</dbReference>
<dbReference type="SMR" id="Q98F00"/>
<dbReference type="GeneID" id="66681452"/>
<dbReference type="KEGG" id="mlo:mll4004"/>
<dbReference type="eggNOG" id="COG1576">
    <property type="taxonomic scope" value="Bacteria"/>
</dbReference>
<dbReference type="HOGENOM" id="CLU_100552_1_1_5"/>
<dbReference type="Proteomes" id="UP000000552">
    <property type="component" value="Chromosome"/>
</dbReference>
<dbReference type="GO" id="GO:0005737">
    <property type="term" value="C:cytoplasm"/>
    <property type="evidence" value="ECO:0007669"/>
    <property type="project" value="UniProtKB-SubCell"/>
</dbReference>
<dbReference type="GO" id="GO:0070038">
    <property type="term" value="F:rRNA (pseudouridine-N3-)-methyltransferase activity"/>
    <property type="evidence" value="ECO:0007669"/>
    <property type="project" value="UniProtKB-UniRule"/>
</dbReference>
<dbReference type="CDD" id="cd18081">
    <property type="entry name" value="RlmH-like"/>
    <property type="match status" value="1"/>
</dbReference>
<dbReference type="Gene3D" id="3.40.1280.10">
    <property type="match status" value="1"/>
</dbReference>
<dbReference type="HAMAP" id="MF_00658">
    <property type="entry name" value="23SrRNA_methyltr_H"/>
    <property type="match status" value="1"/>
</dbReference>
<dbReference type="InterPro" id="IPR029028">
    <property type="entry name" value="Alpha/beta_knot_MTases"/>
</dbReference>
<dbReference type="InterPro" id="IPR003742">
    <property type="entry name" value="RlmH-like"/>
</dbReference>
<dbReference type="InterPro" id="IPR029026">
    <property type="entry name" value="tRNA_m1G_MTases_N"/>
</dbReference>
<dbReference type="NCBIfam" id="NF000989">
    <property type="entry name" value="PRK00103.2-3"/>
    <property type="match status" value="1"/>
</dbReference>
<dbReference type="PANTHER" id="PTHR33603">
    <property type="entry name" value="METHYLTRANSFERASE"/>
    <property type="match status" value="1"/>
</dbReference>
<dbReference type="PANTHER" id="PTHR33603:SF1">
    <property type="entry name" value="RIBOSOMAL RNA LARGE SUBUNIT METHYLTRANSFERASE H"/>
    <property type="match status" value="1"/>
</dbReference>
<dbReference type="Pfam" id="PF02590">
    <property type="entry name" value="SPOUT_MTase"/>
    <property type="match status" value="1"/>
</dbReference>
<dbReference type="PIRSF" id="PIRSF004505">
    <property type="entry name" value="MT_bac"/>
    <property type="match status" value="1"/>
</dbReference>
<dbReference type="SUPFAM" id="SSF75217">
    <property type="entry name" value="alpha/beta knot"/>
    <property type="match status" value="1"/>
</dbReference>
<gene>
    <name evidence="1" type="primary">rlmH</name>
    <name type="ordered locus">mll4004</name>
</gene>
<keyword id="KW-0963">Cytoplasm</keyword>
<keyword id="KW-0489">Methyltransferase</keyword>
<keyword id="KW-0698">rRNA processing</keyword>
<keyword id="KW-0949">S-adenosyl-L-methionine</keyword>
<keyword id="KW-0808">Transferase</keyword>
<sequence length="160" mass="17475">MKISVHAVGRMKAGPERELADRYFERFAKSGPAVGLEFAGITEIAEGRSQSAIERQRDEGSRLQAQLQPGTALILLDERGKSLSSQDLANRIGQLRDGGRKVLVLAIGGADGHDPPLRDQADLVLSFGALTWPHQLVRVMLGEQLYRVATILSGHPYHRA</sequence>
<accession>Q98F00</accession>
<evidence type="ECO:0000255" key="1">
    <source>
        <dbReference type="HAMAP-Rule" id="MF_00658"/>
    </source>
</evidence>
<name>RLMH_RHILO</name>
<feature type="chain" id="PRO_0000198167" description="Ribosomal RNA large subunit methyltransferase H">
    <location>
        <begin position="1"/>
        <end position="160"/>
    </location>
</feature>
<feature type="binding site" evidence="1">
    <location>
        <position position="76"/>
    </location>
    <ligand>
        <name>S-adenosyl-L-methionine</name>
        <dbReference type="ChEBI" id="CHEBI:59789"/>
    </ligand>
</feature>
<feature type="binding site" evidence="1">
    <location>
        <position position="108"/>
    </location>
    <ligand>
        <name>S-adenosyl-L-methionine</name>
        <dbReference type="ChEBI" id="CHEBI:59789"/>
    </ligand>
</feature>
<feature type="binding site" evidence="1">
    <location>
        <begin position="127"/>
        <end position="132"/>
    </location>
    <ligand>
        <name>S-adenosyl-L-methionine</name>
        <dbReference type="ChEBI" id="CHEBI:59789"/>
    </ligand>
</feature>
<reference key="1">
    <citation type="journal article" date="2000" name="DNA Res.">
        <title>Complete genome structure of the nitrogen-fixing symbiotic bacterium Mesorhizobium loti.</title>
        <authorList>
            <person name="Kaneko T."/>
            <person name="Nakamura Y."/>
            <person name="Sato S."/>
            <person name="Asamizu E."/>
            <person name="Kato T."/>
            <person name="Sasamoto S."/>
            <person name="Watanabe A."/>
            <person name="Idesawa K."/>
            <person name="Ishikawa A."/>
            <person name="Kawashima K."/>
            <person name="Kimura T."/>
            <person name="Kishida Y."/>
            <person name="Kiyokawa C."/>
            <person name="Kohara M."/>
            <person name="Matsumoto M."/>
            <person name="Matsuno A."/>
            <person name="Mochizuki Y."/>
            <person name="Nakayama S."/>
            <person name="Nakazaki N."/>
            <person name="Shimpo S."/>
            <person name="Sugimoto M."/>
            <person name="Takeuchi C."/>
            <person name="Yamada M."/>
            <person name="Tabata S."/>
        </authorList>
    </citation>
    <scope>NUCLEOTIDE SEQUENCE [LARGE SCALE GENOMIC DNA]</scope>
    <source>
        <strain>LMG 29417 / CECT 9101 / MAFF 303099</strain>
    </source>
</reference>
<proteinExistence type="inferred from homology"/>
<organism>
    <name type="scientific">Mesorhizobium japonicum (strain LMG 29417 / CECT 9101 / MAFF 303099)</name>
    <name type="common">Mesorhizobium loti (strain MAFF 303099)</name>
    <dbReference type="NCBI Taxonomy" id="266835"/>
    <lineage>
        <taxon>Bacteria</taxon>
        <taxon>Pseudomonadati</taxon>
        <taxon>Pseudomonadota</taxon>
        <taxon>Alphaproteobacteria</taxon>
        <taxon>Hyphomicrobiales</taxon>
        <taxon>Phyllobacteriaceae</taxon>
        <taxon>Mesorhizobium</taxon>
    </lineage>
</organism>
<protein>
    <recommendedName>
        <fullName evidence="1">Ribosomal RNA large subunit methyltransferase H</fullName>
        <ecNumber evidence="1">2.1.1.177</ecNumber>
    </recommendedName>
    <alternativeName>
        <fullName evidence="1">23S rRNA (pseudouridine1915-N3)-methyltransferase</fullName>
    </alternativeName>
    <alternativeName>
        <fullName evidence="1">23S rRNA m3Psi1915 methyltransferase</fullName>
    </alternativeName>
    <alternativeName>
        <fullName evidence="1">rRNA (pseudouridine-N3-)-methyltransferase RlmH</fullName>
    </alternativeName>
</protein>